<comment type="subunit">
    <text evidence="2">Interacts with RS2.</text>
</comment>
<comment type="interaction">
    <interactant intactId="EBI-761296">
        <id>Q32SG5</id>
    </interactant>
    <interactant intactId="EBI-761350">
        <id>Q9S7B2</id>
        <label>RS2</label>
    </interactant>
    <organismsDiffer>false</organismsDiffer>
    <experiments>2</experiments>
</comment>
<comment type="subcellular location">
    <subcellularLocation>
        <location evidence="2">Nucleus</location>
    </subcellularLocation>
</comment>
<comment type="tissue specificity">
    <text evidence="2">Expressed in vegetative tissues. More abundant in apices and young leaf primordia than in fully expanded leaf tissues.</text>
</comment>
<evidence type="ECO:0000256" key="1">
    <source>
        <dbReference type="SAM" id="MobiDB-lite"/>
    </source>
</evidence>
<evidence type="ECO:0000269" key="2">
    <source>
    </source>
</evidence>
<sequence>MTEDRAHKVADEPAASGRQSPERKKRKWDQPAEDLVSAAVTAAAVSGMPVMNFGALPGVVLPGVTAYGAATLPSVVPVPYSLPPHIAPSVLQNAAAAAQKLSQAKIPDEVIAREIVINDADPSVRYKLTKRQTQEEIQKCTNTVIITRGKYHPPNLLPDGEKPLYLHISAGSQLKDTAERIKAVDRAASMIEEILKQGTTSESISVPFSSSTGQAVRPFSASVFLGFDADPSLNITARIRGPNDQYINHIMKETGVTVVLRGKDSENLGSCHSEASQQPLHLYLTSMHLKNLEAAKVLAENLLDTVAAEFGASRISSSKVYGAVPPPQQLLAGVDTSGTKSDVHYIVGPNVLSGATHSFASTGVIAPVVAPAVTVQSGAPTYSGVPLPSNMAYPIPPANGGAFYSGYGDIYPQATPLQQLAFTLKHASSSATQAVPVTSTPTSMATKGNSILDAEMDKRSRRKFQELPVSKGPATESQNSQQGSKFVKTGLDSSGNIGSSSIAPPKKVHPGSNGMLPQEEADMPSHLSISTKMLPPPLKSMLPLPPRSMPPPPPKSMPPPPPKFPSDEFLSRNENKFFPLKEPTAPPRSFDAISVLPSERRPREPKEEKNKRHTCV</sequence>
<proteinExistence type="evidence at protein level"/>
<keyword id="KW-0539">Nucleus</keyword>
<keyword id="KW-1185">Reference proteome</keyword>
<keyword id="KW-0694">RNA-binding</keyword>
<protein>
    <recommendedName>
        <fullName>Protein RIK</fullName>
    </recommendedName>
    <alternativeName>
        <fullName>Rough sheath 2-interacting KH domain protein</fullName>
        <shortName>RS2-interacting KH domain protein</shortName>
    </alternativeName>
</protein>
<reference key="1">
    <citation type="journal article" date="2005" name="Plant Cell">
        <title>Maize rough sheath2 and its Arabidopsis orthologue ASYMMETRIC LEAVES1 interact with HIRA, a predicted histone chaperone, to maintain knox gene silencing and determinacy during organogenesis.</title>
        <authorList>
            <person name="Phelps-Durr T.L."/>
            <person name="Thomas J."/>
            <person name="Vahab P."/>
            <person name="Timmermans M.C.P."/>
        </authorList>
    </citation>
    <scope>NUCLEOTIDE SEQUENCE [MRNA]</scope>
    <scope>TISSUE SPECIFICITY</scope>
    <scope>SUBCELLULAR LOCATION</scope>
    <scope>INTERACTION WITH RS2</scope>
    <source>
        <strain>cv. B73</strain>
        <tissue>Apices</tissue>
    </source>
</reference>
<name>RIK_MAIZE</name>
<organism>
    <name type="scientific">Zea mays</name>
    <name type="common">Maize</name>
    <dbReference type="NCBI Taxonomy" id="4577"/>
    <lineage>
        <taxon>Eukaryota</taxon>
        <taxon>Viridiplantae</taxon>
        <taxon>Streptophyta</taxon>
        <taxon>Embryophyta</taxon>
        <taxon>Tracheophyta</taxon>
        <taxon>Spermatophyta</taxon>
        <taxon>Magnoliopsida</taxon>
        <taxon>Liliopsida</taxon>
        <taxon>Poales</taxon>
        <taxon>Poaceae</taxon>
        <taxon>PACMAD clade</taxon>
        <taxon>Panicoideae</taxon>
        <taxon>Andropogonodae</taxon>
        <taxon>Andropogoneae</taxon>
        <taxon>Tripsacinae</taxon>
        <taxon>Zea</taxon>
    </lineage>
</organism>
<accession>Q32SG5</accession>
<dbReference type="EMBL" id="AY940679">
    <property type="protein sequence ID" value="AAY24682.1"/>
    <property type="molecule type" value="mRNA"/>
</dbReference>
<dbReference type="IntAct" id="Q32SG5">
    <property type="interactions" value="1"/>
</dbReference>
<dbReference type="STRING" id="4577.Q32SG5"/>
<dbReference type="PaxDb" id="4577-GRMZM2G079823_P01"/>
<dbReference type="eggNOG" id="KOG1960">
    <property type="taxonomic scope" value="Eukaryota"/>
</dbReference>
<dbReference type="InParanoid" id="Q32SG5"/>
<dbReference type="PRO" id="PR:Q32SG5"/>
<dbReference type="Proteomes" id="UP000007305">
    <property type="component" value="Unplaced"/>
</dbReference>
<dbReference type="ExpressionAtlas" id="Q32SG5">
    <property type="expression patterns" value="baseline and differential"/>
</dbReference>
<dbReference type="GO" id="GO:0005634">
    <property type="term" value="C:nucleus"/>
    <property type="evidence" value="ECO:0000318"/>
    <property type="project" value="GO_Central"/>
</dbReference>
<dbReference type="GO" id="GO:0003723">
    <property type="term" value="F:RNA binding"/>
    <property type="evidence" value="ECO:0000318"/>
    <property type="project" value="GO_Central"/>
</dbReference>
<dbReference type="FunFam" id="3.30.1370.10:FF:000037">
    <property type="entry name" value="KH domain protein"/>
    <property type="match status" value="1"/>
</dbReference>
<dbReference type="Gene3D" id="3.30.1370.10">
    <property type="entry name" value="K Homology domain, type 1"/>
    <property type="match status" value="1"/>
</dbReference>
<dbReference type="InterPro" id="IPR055256">
    <property type="entry name" value="KH_1_KHDC4/BBP-like"/>
</dbReference>
<dbReference type="InterPro" id="IPR036612">
    <property type="entry name" value="KH_dom_type_1_sf"/>
</dbReference>
<dbReference type="InterPro" id="IPR056149">
    <property type="entry name" value="PRP5/DDX46/KHDC4_KH"/>
</dbReference>
<dbReference type="InterPro" id="IPR031121">
    <property type="entry name" value="RIK/BLOM7"/>
</dbReference>
<dbReference type="PANTHER" id="PTHR15744">
    <property type="entry name" value="BLOM7"/>
    <property type="match status" value="1"/>
</dbReference>
<dbReference type="PANTHER" id="PTHR15744:SF0">
    <property type="entry name" value="KH HOMOLOGY DOMAIN-CONTAINING PROTEIN 4"/>
    <property type="match status" value="1"/>
</dbReference>
<dbReference type="Pfam" id="PF22675">
    <property type="entry name" value="KH-I_KHDC4-BBP"/>
    <property type="match status" value="1"/>
</dbReference>
<dbReference type="Pfam" id="PF23469">
    <property type="entry name" value="KH_12"/>
    <property type="match status" value="1"/>
</dbReference>
<dbReference type="SUPFAM" id="SSF54791">
    <property type="entry name" value="Eukaryotic type KH-domain (KH-domain type I)"/>
    <property type="match status" value="1"/>
</dbReference>
<feature type="chain" id="PRO_0000299131" description="Protein RIK">
    <location>
        <begin position="1"/>
        <end position="616"/>
    </location>
</feature>
<feature type="domain" description="KH">
    <location>
        <begin position="198"/>
        <end position="304"/>
    </location>
</feature>
<feature type="region of interest" description="Disordered" evidence="1">
    <location>
        <begin position="1"/>
        <end position="32"/>
    </location>
</feature>
<feature type="region of interest" description="Disordered" evidence="1">
    <location>
        <begin position="432"/>
        <end position="455"/>
    </location>
</feature>
<feature type="region of interest" description="Disordered" evidence="1">
    <location>
        <begin position="467"/>
        <end position="616"/>
    </location>
</feature>
<feature type="compositionally biased region" description="Basic and acidic residues" evidence="1">
    <location>
        <begin position="1"/>
        <end position="11"/>
    </location>
</feature>
<feature type="compositionally biased region" description="Polar residues" evidence="1">
    <location>
        <begin position="432"/>
        <end position="449"/>
    </location>
</feature>
<feature type="compositionally biased region" description="Polar residues" evidence="1">
    <location>
        <begin position="475"/>
        <end position="484"/>
    </location>
</feature>
<feature type="compositionally biased region" description="Polar residues" evidence="1">
    <location>
        <begin position="491"/>
        <end position="502"/>
    </location>
</feature>
<feature type="compositionally biased region" description="Pro residues" evidence="1">
    <location>
        <begin position="534"/>
        <end position="564"/>
    </location>
</feature>
<feature type="compositionally biased region" description="Basic and acidic residues" evidence="1">
    <location>
        <begin position="565"/>
        <end position="575"/>
    </location>
</feature>
<feature type="compositionally biased region" description="Basic and acidic residues" evidence="1">
    <location>
        <begin position="598"/>
        <end position="610"/>
    </location>
</feature>